<organism>
    <name type="scientific">Halocynthia roretzi</name>
    <name type="common">Sea squirt</name>
    <name type="synonym">Cynthia roretzi</name>
    <dbReference type="NCBI Taxonomy" id="7729"/>
    <lineage>
        <taxon>Eukaryota</taxon>
        <taxon>Metazoa</taxon>
        <taxon>Chordata</taxon>
        <taxon>Tunicata</taxon>
        <taxon>Ascidiacea</taxon>
        <taxon>Stolidobranchia</taxon>
        <taxon>Pyuridae</taxon>
        <taxon>Halocynthia</taxon>
    </lineage>
</organism>
<reference key="1">
    <citation type="journal article" date="1999" name="Gene">
        <title>The structural organization of the ascidian, Halocynthia roretzi, calmodulin genes. The vicissitude of introns during the evolution of calmodulin genes.</title>
        <authorList>
            <person name="Yuasa H.J."/>
            <person name="Yamamoto H."/>
            <person name="Takagi T."/>
        </authorList>
    </citation>
    <scope>NUCLEOTIDE SEQUENCE [GENOMIC DNA]</scope>
</reference>
<reference key="2">
    <citation type="submission" date="1997-04" db="EMBL/GenBank/DDBJ databases">
        <title>Primary structure of protochordate calmodulin.</title>
        <authorList>
            <person name="Yuasa H.J."/>
            <person name="Takagi T."/>
        </authorList>
    </citation>
    <scope>NUCLEOTIDE SEQUENCE [MRNA]</scope>
</reference>
<reference key="3">
    <citation type="submission" date="1988-05" db="PIR data bank">
        <authorList>
            <person name="Yazawa M."/>
            <person name="Toda H."/>
            <person name="Sakiyama F."/>
            <person name="Yagi K."/>
        </authorList>
    </citation>
    <scope>PROTEIN SEQUENCE OF 2-149</scope>
    <scope>ACETYLATION AT ALA-2</scope>
</reference>
<protein>
    <recommendedName>
        <fullName>Calmodulin-A</fullName>
        <shortName>CaM A</shortName>
    </recommendedName>
</protein>
<keyword id="KW-0007">Acetylation</keyword>
<keyword id="KW-0106">Calcium</keyword>
<keyword id="KW-0903">Direct protein sequencing</keyword>
<keyword id="KW-0479">Metal-binding</keyword>
<keyword id="KW-0488">Methylation</keyword>
<keyword id="KW-0677">Repeat</keyword>
<accession>P62153</accession>
<accession>P07181</accession>
<accession>Q9V3T4</accession>
<dbReference type="EMBL" id="AB018796">
    <property type="protein sequence ID" value="BAA33967.1"/>
    <property type="molecule type" value="Genomic_DNA"/>
</dbReference>
<dbReference type="EMBL" id="AB003083">
    <property type="protein sequence ID" value="BAA19788.1"/>
    <property type="molecule type" value="mRNA"/>
</dbReference>
<dbReference type="PIR" id="JK0015">
    <property type="entry name" value="MCAZS"/>
</dbReference>
<dbReference type="SMR" id="P62153"/>
<dbReference type="GO" id="GO:0016460">
    <property type="term" value="C:myosin II complex"/>
    <property type="evidence" value="ECO:0007669"/>
    <property type="project" value="TreeGrafter"/>
</dbReference>
<dbReference type="GO" id="GO:0005509">
    <property type="term" value="F:calcium ion binding"/>
    <property type="evidence" value="ECO:0007669"/>
    <property type="project" value="InterPro"/>
</dbReference>
<dbReference type="CDD" id="cd00051">
    <property type="entry name" value="EFh"/>
    <property type="match status" value="2"/>
</dbReference>
<dbReference type="FunFam" id="1.10.238.10:FF:000527">
    <property type="entry name" value="Calmodulin-3"/>
    <property type="match status" value="1"/>
</dbReference>
<dbReference type="Gene3D" id="1.10.238.10">
    <property type="entry name" value="EF-hand"/>
    <property type="match status" value="3"/>
</dbReference>
<dbReference type="InterPro" id="IPR050230">
    <property type="entry name" value="CALM/Myosin/TropC-like"/>
</dbReference>
<dbReference type="InterPro" id="IPR011992">
    <property type="entry name" value="EF-hand-dom_pair"/>
</dbReference>
<dbReference type="InterPro" id="IPR018247">
    <property type="entry name" value="EF_Hand_1_Ca_BS"/>
</dbReference>
<dbReference type="InterPro" id="IPR002048">
    <property type="entry name" value="EF_hand_dom"/>
</dbReference>
<dbReference type="PANTHER" id="PTHR23048:SF0">
    <property type="entry name" value="CALMODULIN LIKE 3"/>
    <property type="match status" value="1"/>
</dbReference>
<dbReference type="PANTHER" id="PTHR23048">
    <property type="entry name" value="MYOSIN LIGHT CHAIN 1, 3"/>
    <property type="match status" value="1"/>
</dbReference>
<dbReference type="Pfam" id="PF13499">
    <property type="entry name" value="EF-hand_7"/>
    <property type="match status" value="2"/>
</dbReference>
<dbReference type="SMART" id="SM00054">
    <property type="entry name" value="EFh"/>
    <property type="match status" value="4"/>
</dbReference>
<dbReference type="SUPFAM" id="SSF47473">
    <property type="entry name" value="EF-hand"/>
    <property type="match status" value="1"/>
</dbReference>
<dbReference type="PROSITE" id="PS00018">
    <property type="entry name" value="EF_HAND_1"/>
    <property type="match status" value="4"/>
</dbReference>
<dbReference type="PROSITE" id="PS50222">
    <property type="entry name" value="EF_HAND_2"/>
    <property type="match status" value="4"/>
</dbReference>
<comment type="function">
    <text>Calmodulin mediates the control of a large number of enzymes, ion channels and other proteins by Ca(2+). Among the enzymes to be stimulated by the calmodulin-Ca(2+) complex are a number of protein kinases and phosphatases.</text>
</comment>
<comment type="miscellaneous">
    <text>This protein has four functional calcium-binding sites.</text>
</comment>
<comment type="similarity">
    <text evidence="4">Belongs to the calmodulin family.</text>
</comment>
<feature type="initiator methionine" description="Removed" evidence="3">
    <location>
        <position position="1"/>
    </location>
</feature>
<feature type="chain" id="PRO_0000198254" description="Calmodulin-A">
    <location>
        <begin position="2"/>
        <end position="149"/>
    </location>
</feature>
<feature type="domain" description="EF-hand 1" evidence="2">
    <location>
        <begin position="8"/>
        <end position="43"/>
    </location>
</feature>
<feature type="domain" description="EF-hand 2" evidence="2">
    <location>
        <begin position="44"/>
        <end position="79"/>
    </location>
</feature>
<feature type="domain" description="EF-hand 3" evidence="2">
    <location>
        <begin position="81"/>
        <end position="116"/>
    </location>
</feature>
<feature type="domain" description="EF-hand 4" evidence="2">
    <location>
        <begin position="117"/>
        <end position="149"/>
    </location>
</feature>
<feature type="binding site" evidence="2">
    <location>
        <position position="21"/>
    </location>
    <ligand>
        <name>Ca(2+)</name>
        <dbReference type="ChEBI" id="CHEBI:29108"/>
        <label>1</label>
    </ligand>
</feature>
<feature type="binding site" evidence="2">
    <location>
        <position position="23"/>
    </location>
    <ligand>
        <name>Ca(2+)</name>
        <dbReference type="ChEBI" id="CHEBI:29108"/>
        <label>1</label>
    </ligand>
</feature>
<feature type="binding site" evidence="2">
    <location>
        <position position="25"/>
    </location>
    <ligand>
        <name>Ca(2+)</name>
        <dbReference type="ChEBI" id="CHEBI:29108"/>
        <label>1</label>
    </ligand>
</feature>
<feature type="binding site" evidence="2">
    <location>
        <position position="27"/>
    </location>
    <ligand>
        <name>Ca(2+)</name>
        <dbReference type="ChEBI" id="CHEBI:29108"/>
        <label>1</label>
    </ligand>
</feature>
<feature type="binding site" evidence="2">
    <location>
        <position position="32"/>
    </location>
    <ligand>
        <name>Ca(2+)</name>
        <dbReference type="ChEBI" id="CHEBI:29108"/>
        <label>1</label>
    </ligand>
</feature>
<feature type="binding site" evidence="2">
    <location>
        <position position="57"/>
    </location>
    <ligand>
        <name>Ca(2+)</name>
        <dbReference type="ChEBI" id="CHEBI:29108"/>
        <label>2</label>
    </ligand>
</feature>
<feature type="binding site" evidence="2">
    <location>
        <position position="59"/>
    </location>
    <ligand>
        <name>Ca(2+)</name>
        <dbReference type="ChEBI" id="CHEBI:29108"/>
        <label>2</label>
    </ligand>
</feature>
<feature type="binding site" evidence="2">
    <location>
        <position position="61"/>
    </location>
    <ligand>
        <name>Ca(2+)</name>
        <dbReference type="ChEBI" id="CHEBI:29108"/>
        <label>2</label>
    </ligand>
</feature>
<feature type="binding site" evidence="2">
    <location>
        <position position="63"/>
    </location>
    <ligand>
        <name>Ca(2+)</name>
        <dbReference type="ChEBI" id="CHEBI:29108"/>
        <label>2</label>
    </ligand>
</feature>
<feature type="binding site" evidence="2">
    <location>
        <position position="68"/>
    </location>
    <ligand>
        <name>Ca(2+)</name>
        <dbReference type="ChEBI" id="CHEBI:29108"/>
        <label>2</label>
    </ligand>
</feature>
<feature type="binding site" evidence="2">
    <location>
        <position position="94"/>
    </location>
    <ligand>
        <name>Ca(2+)</name>
        <dbReference type="ChEBI" id="CHEBI:29108"/>
        <label>3</label>
    </ligand>
</feature>
<feature type="binding site" evidence="2">
    <location>
        <position position="96"/>
    </location>
    <ligand>
        <name>Ca(2+)</name>
        <dbReference type="ChEBI" id="CHEBI:29108"/>
        <label>3</label>
    </ligand>
</feature>
<feature type="binding site" evidence="2">
    <location>
        <position position="98"/>
    </location>
    <ligand>
        <name>Ca(2+)</name>
        <dbReference type="ChEBI" id="CHEBI:29108"/>
        <label>3</label>
    </ligand>
</feature>
<feature type="binding site" evidence="2">
    <location>
        <position position="105"/>
    </location>
    <ligand>
        <name>Ca(2+)</name>
        <dbReference type="ChEBI" id="CHEBI:29108"/>
        <label>3</label>
    </ligand>
</feature>
<feature type="binding site" evidence="2">
    <location>
        <position position="130"/>
    </location>
    <ligand>
        <name>Ca(2+)</name>
        <dbReference type="ChEBI" id="CHEBI:29108"/>
        <label>4</label>
    </ligand>
</feature>
<feature type="binding site" evidence="2">
    <location>
        <position position="132"/>
    </location>
    <ligand>
        <name>Ca(2+)</name>
        <dbReference type="ChEBI" id="CHEBI:29108"/>
        <label>4</label>
    </ligand>
</feature>
<feature type="binding site" evidence="2">
    <location>
        <position position="134"/>
    </location>
    <ligand>
        <name>Ca(2+)</name>
        <dbReference type="ChEBI" id="CHEBI:29108"/>
        <label>4</label>
    </ligand>
</feature>
<feature type="binding site" evidence="2">
    <location>
        <position position="136"/>
    </location>
    <ligand>
        <name>Ca(2+)</name>
        <dbReference type="ChEBI" id="CHEBI:29108"/>
        <label>4</label>
    </ligand>
</feature>
<feature type="binding site" evidence="2">
    <location>
        <position position="141"/>
    </location>
    <ligand>
        <name>Ca(2+)</name>
        <dbReference type="ChEBI" id="CHEBI:29108"/>
        <label>4</label>
    </ligand>
</feature>
<feature type="modified residue" description="N-acetylalanine" evidence="3">
    <location>
        <position position="2"/>
    </location>
</feature>
<feature type="modified residue" description="N6,N6,N6-trimethyllysine" evidence="1">
    <location>
        <position position="116"/>
    </location>
</feature>
<feature type="sequence conflict" description="In Ref. 3; AA sequence." evidence="4" ref="3">
    <original>N</original>
    <variation>D</variation>
    <location>
        <position position="61"/>
    </location>
</feature>
<evidence type="ECO:0000250" key="1"/>
<evidence type="ECO:0000255" key="2">
    <source>
        <dbReference type="PROSITE-ProRule" id="PRU00448"/>
    </source>
</evidence>
<evidence type="ECO:0000269" key="3">
    <source ref="3"/>
</evidence>
<evidence type="ECO:0000305" key="4"/>
<proteinExistence type="evidence at protein level"/>
<sequence length="149" mass="16811">MADQLTEEQIAEFKEAFSLFDKDGDGTITTKELGTVMRSLGQNPTEAELQDMINEVDADGNGTIDFPEFLTMMARKMKDTDSEEEIREAFRVFDKDGNGFISAAELRHVMTNLGEKLTDEEVDEMIREADIDGDGQVNYEEFVTMMTSK</sequence>
<name>CALMA_HALRO</name>